<organism>
    <name type="scientific">Vibrio vulnificus (strain CMCP6)</name>
    <dbReference type="NCBI Taxonomy" id="216895"/>
    <lineage>
        <taxon>Bacteria</taxon>
        <taxon>Pseudomonadati</taxon>
        <taxon>Pseudomonadota</taxon>
        <taxon>Gammaproteobacteria</taxon>
        <taxon>Vibrionales</taxon>
        <taxon>Vibrionaceae</taxon>
        <taxon>Vibrio</taxon>
    </lineage>
</organism>
<comment type="function">
    <text evidence="1">Binds to an autoinducer molecule. This complex then interacts with the LuxQ sensor protein (By similarity).</text>
</comment>
<comment type="subcellular location">
    <subcellularLocation>
        <location evidence="3">Periplasm</location>
    </subcellularLocation>
</comment>
<comment type="similarity">
    <text evidence="3">Belongs to the bacterial solute-binding protein 2 family.</text>
</comment>
<name>LUXP_VIBVU</name>
<keyword id="KW-0574">Periplasm</keyword>
<keyword id="KW-0732">Signal</keyword>
<feature type="signal peptide" evidence="2">
    <location>
        <begin position="1"/>
        <end position="13"/>
    </location>
</feature>
<feature type="chain" id="PRO_0000031728" description="Autoinducer 2-binding periplasmic protein LuxP">
    <location>
        <begin position="14"/>
        <end position="366"/>
    </location>
</feature>
<sequence length="366" mass="41389">MKKILLTCLLASASFQVSSHTSEVLSGYWAYQEFLEKFPQQGVLTRELSEVVRNAPVPLKRHQSKPIRISVVFPGQQISDYWVRNLSAFEKRMDKLQISYQINQVFTRPNADVKQQSVSLMEALKSKSDYLIFTLDTTRHRKFIEHVLDSSETKLILQNITTPVQAWDKRQPFLYVGFDHAEGSIALADKFKQLYPQGANYSVLYFSEGYVSDARGDTFIHQMNHSDRFALKSSFYTKATKASGYESAKNSLERYPDVDFIYACSTDVALGAIDALKELGRTNIKINGWGGGSAELDAIAAGDLDLTVMRMNDDTGIAMAEAIKWDIEGRTVPTVFSGDFEVVTKEDSPEHIELLKKRAFRYSDQP</sequence>
<accession>Q8D5Z5</accession>
<proteinExistence type="inferred from homology"/>
<gene>
    <name type="primary">luxP</name>
    <name type="ordered locus">VV2_0753</name>
</gene>
<reference key="1">
    <citation type="submission" date="2002-12" db="EMBL/GenBank/DDBJ databases">
        <title>Complete genome sequence of Vibrio vulnificus CMCP6.</title>
        <authorList>
            <person name="Rhee J.H."/>
            <person name="Kim S.Y."/>
            <person name="Chung S.S."/>
            <person name="Kim J.J."/>
            <person name="Moon Y.H."/>
            <person name="Jeong H."/>
            <person name="Choy H.E."/>
        </authorList>
    </citation>
    <scope>NUCLEOTIDE SEQUENCE [LARGE SCALE GENOMIC DNA]</scope>
    <source>
        <strain>CMCP6</strain>
    </source>
</reference>
<dbReference type="EMBL" id="AE016796">
    <property type="protein sequence ID" value="AAO07684.1"/>
    <property type="molecule type" value="Genomic_DNA"/>
</dbReference>
<dbReference type="RefSeq" id="WP_011081680.1">
    <property type="nucleotide sequence ID" value="NC_004460.2"/>
</dbReference>
<dbReference type="SMR" id="Q8D5Z5"/>
<dbReference type="KEGG" id="vvu:VV2_0753"/>
<dbReference type="HOGENOM" id="CLU_064743_1_0_6"/>
<dbReference type="Proteomes" id="UP000002275">
    <property type="component" value="Chromosome 2"/>
</dbReference>
<dbReference type="GO" id="GO:0042597">
    <property type="term" value="C:periplasmic space"/>
    <property type="evidence" value="ECO:0007669"/>
    <property type="project" value="UniProtKB-SubCell"/>
</dbReference>
<dbReference type="GO" id="GO:0030246">
    <property type="term" value="F:carbohydrate binding"/>
    <property type="evidence" value="ECO:0007669"/>
    <property type="project" value="UniProtKB-ARBA"/>
</dbReference>
<dbReference type="CDD" id="cd06303">
    <property type="entry name" value="PBP1_LuxPQ_Quorum_Sensing"/>
    <property type="match status" value="1"/>
</dbReference>
<dbReference type="Gene3D" id="3.40.50.2300">
    <property type="match status" value="2"/>
</dbReference>
<dbReference type="InterPro" id="IPR028082">
    <property type="entry name" value="Peripla_BP_I"/>
</dbReference>
<dbReference type="InterPro" id="IPR025997">
    <property type="entry name" value="SBP_2_dom"/>
</dbReference>
<dbReference type="PANTHER" id="PTHR46847">
    <property type="entry name" value="D-ALLOSE-BINDING PERIPLASMIC PROTEIN-RELATED"/>
    <property type="match status" value="1"/>
</dbReference>
<dbReference type="PANTHER" id="PTHR46847:SF1">
    <property type="entry name" value="D-ALLOSE-BINDING PERIPLASMIC PROTEIN-RELATED"/>
    <property type="match status" value="1"/>
</dbReference>
<dbReference type="Pfam" id="PF13407">
    <property type="entry name" value="Peripla_BP_4"/>
    <property type="match status" value="1"/>
</dbReference>
<dbReference type="SUPFAM" id="SSF53822">
    <property type="entry name" value="Periplasmic binding protein-like I"/>
    <property type="match status" value="1"/>
</dbReference>
<protein>
    <recommendedName>
        <fullName>Autoinducer 2-binding periplasmic protein LuxP</fullName>
    </recommendedName>
</protein>
<evidence type="ECO:0000250" key="1"/>
<evidence type="ECO:0000255" key="2"/>
<evidence type="ECO:0000305" key="3"/>